<evidence type="ECO:0000255" key="1">
    <source>
        <dbReference type="HAMAP-Rule" id="MF_00038"/>
    </source>
</evidence>
<reference key="1">
    <citation type="submission" date="2007-05" db="EMBL/GenBank/DDBJ databases">
        <title>Complete sequence of Pseudomonas putida F1.</title>
        <authorList>
            <consortium name="US DOE Joint Genome Institute"/>
            <person name="Copeland A."/>
            <person name="Lucas S."/>
            <person name="Lapidus A."/>
            <person name="Barry K."/>
            <person name="Detter J.C."/>
            <person name="Glavina del Rio T."/>
            <person name="Hammon N."/>
            <person name="Israni S."/>
            <person name="Dalin E."/>
            <person name="Tice H."/>
            <person name="Pitluck S."/>
            <person name="Chain P."/>
            <person name="Malfatti S."/>
            <person name="Shin M."/>
            <person name="Vergez L."/>
            <person name="Schmutz J."/>
            <person name="Larimer F."/>
            <person name="Land M."/>
            <person name="Hauser L."/>
            <person name="Kyrpides N."/>
            <person name="Lykidis A."/>
            <person name="Parales R."/>
            <person name="Richardson P."/>
        </authorList>
    </citation>
    <scope>NUCLEOTIDE SEQUENCE [LARGE SCALE GENOMIC DNA]</scope>
    <source>
        <strain>ATCC 700007 / DSM 6899 / JCM 31910 / BCRC 17059 / LMG 24140 / F1</strain>
    </source>
</reference>
<name>MRAY_PSEP1</name>
<keyword id="KW-0131">Cell cycle</keyword>
<keyword id="KW-0132">Cell division</keyword>
<keyword id="KW-0997">Cell inner membrane</keyword>
<keyword id="KW-1003">Cell membrane</keyword>
<keyword id="KW-0133">Cell shape</keyword>
<keyword id="KW-0961">Cell wall biogenesis/degradation</keyword>
<keyword id="KW-0460">Magnesium</keyword>
<keyword id="KW-0472">Membrane</keyword>
<keyword id="KW-0479">Metal-binding</keyword>
<keyword id="KW-0573">Peptidoglycan synthesis</keyword>
<keyword id="KW-0808">Transferase</keyword>
<keyword id="KW-0812">Transmembrane</keyword>
<keyword id="KW-1133">Transmembrane helix</keyword>
<accession>A5W8Q3</accession>
<dbReference type="EC" id="2.7.8.13" evidence="1"/>
<dbReference type="EMBL" id="CP000712">
    <property type="protein sequence ID" value="ABQ80513.1"/>
    <property type="molecule type" value="Genomic_DNA"/>
</dbReference>
<dbReference type="SMR" id="A5W8Q3"/>
<dbReference type="KEGG" id="ppf:Pput_4390"/>
<dbReference type="eggNOG" id="COG0472">
    <property type="taxonomic scope" value="Bacteria"/>
</dbReference>
<dbReference type="HOGENOM" id="CLU_023982_0_0_6"/>
<dbReference type="UniPathway" id="UPA00219"/>
<dbReference type="GO" id="GO:0005886">
    <property type="term" value="C:plasma membrane"/>
    <property type="evidence" value="ECO:0007669"/>
    <property type="project" value="UniProtKB-SubCell"/>
</dbReference>
<dbReference type="GO" id="GO:0046872">
    <property type="term" value="F:metal ion binding"/>
    <property type="evidence" value="ECO:0007669"/>
    <property type="project" value="UniProtKB-KW"/>
</dbReference>
<dbReference type="GO" id="GO:0008963">
    <property type="term" value="F:phospho-N-acetylmuramoyl-pentapeptide-transferase activity"/>
    <property type="evidence" value="ECO:0007669"/>
    <property type="project" value="UniProtKB-UniRule"/>
</dbReference>
<dbReference type="GO" id="GO:0051992">
    <property type="term" value="F:UDP-N-acetylmuramoyl-L-alanyl-D-glutamyl-meso-2,6-diaminopimelyl-D-alanyl-D-alanine:undecaprenyl-phosphate transferase activity"/>
    <property type="evidence" value="ECO:0007669"/>
    <property type="project" value="RHEA"/>
</dbReference>
<dbReference type="GO" id="GO:0051301">
    <property type="term" value="P:cell division"/>
    <property type="evidence" value="ECO:0007669"/>
    <property type="project" value="UniProtKB-KW"/>
</dbReference>
<dbReference type="GO" id="GO:0071555">
    <property type="term" value="P:cell wall organization"/>
    <property type="evidence" value="ECO:0007669"/>
    <property type="project" value="UniProtKB-KW"/>
</dbReference>
<dbReference type="GO" id="GO:0009252">
    <property type="term" value="P:peptidoglycan biosynthetic process"/>
    <property type="evidence" value="ECO:0007669"/>
    <property type="project" value="UniProtKB-UniRule"/>
</dbReference>
<dbReference type="GO" id="GO:0008360">
    <property type="term" value="P:regulation of cell shape"/>
    <property type="evidence" value="ECO:0007669"/>
    <property type="project" value="UniProtKB-KW"/>
</dbReference>
<dbReference type="CDD" id="cd06852">
    <property type="entry name" value="GT_MraY"/>
    <property type="match status" value="1"/>
</dbReference>
<dbReference type="HAMAP" id="MF_00038">
    <property type="entry name" value="MraY"/>
    <property type="match status" value="1"/>
</dbReference>
<dbReference type="InterPro" id="IPR000715">
    <property type="entry name" value="Glycosyl_transferase_4"/>
</dbReference>
<dbReference type="InterPro" id="IPR003524">
    <property type="entry name" value="PNAcMuramoyl-5peptid_Trfase"/>
</dbReference>
<dbReference type="InterPro" id="IPR018480">
    <property type="entry name" value="PNAcMuramoyl-5peptid_Trfase_CS"/>
</dbReference>
<dbReference type="NCBIfam" id="TIGR00445">
    <property type="entry name" value="mraY"/>
    <property type="match status" value="1"/>
</dbReference>
<dbReference type="PANTHER" id="PTHR22926">
    <property type="entry name" value="PHOSPHO-N-ACETYLMURAMOYL-PENTAPEPTIDE-TRANSFERASE"/>
    <property type="match status" value="1"/>
</dbReference>
<dbReference type="PANTHER" id="PTHR22926:SF5">
    <property type="entry name" value="PHOSPHO-N-ACETYLMURAMOYL-PENTAPEPTIDE-TRANSFERASE HOMOLOG"/>
    <property type="match status" value="1"/>
</dbReference>
<dbReference type="Pfam" id="PF00953">
    <property type="entry name" value="Glycos_transf_4"/>
    <property type="match status" value="1"/>
</dbReference>
<dbReference type="Pfam" id="PF10555">
    <property type="entry name" value="MraY_sig1"/>
    <property type="match status" value="1"/>
</dbReference>
<dbReference type="PROSITE" id="PS01347">
    <property type="entry name" value="MRAY_1"/>
    <property type="match status" value="1"/>
</dbReference>
<dbReference type="PROSITE" id="PS01348">
    <property type="entry name" value="MRAY_2"/>
    <property type="match status" value="1"/>
</dbReference>
<protein>
    <recommendedName>
        <fullName evidence="1">Phospho-N-acetylmuramoyl-pentapeptide-transferase</fullName>
        <ecNumber evidence="1">2.7.8.13</ecNumber>
    </recommendedName>
    <alternativeName>
        <fullName evidence="1">UDP-MurNAc-pentapeptide phosphotransferase</fullName>
    </alternativeName>
</protein>
<feature type="chain" id="PRO_1000057284" description="Phospho-N-acetylmuramoyl-pentapeptide-transferase">
    <location>
        <begin position="1"/>
        <end position="360"/>
    </location>
</feature>
<feature type="transmembrane region" description="Helical" evidence="1">
    <location>
        <begin position="25"/>
        <end position="45"/>
    </location>
</feature>
<feature type="transmembrane region" description="Helical" evidence="1">
    <location>
        <begin position="73"/>
        <end position="93"/>
    </location>
</feature>
<feature type="transmembrane region" description="Helical" evidence="1">
    <location>
        <begin position="97"/>
        <end position="117"/>
    </location>
</feature>
<feature type="transmembrane region" description="Helical" evidence="1">
    <location>
        <begin position="134"/>
        <end position="154"/>
    </location>
</feature>
<feature type="transmembrane region" description="Helical" evidence="1">
    <location>
        <begin position="168"/>
        <end position="188"/>
    </location>
</feature>
<feature type="transmembrane region" description="Helical" evidence="1">
    <location>
        <begin position="199"/>
        <end position="219"/>
    </location>
</feature>
<feature type="transmembrane region" description="Helical" evidence="1">
    <location>
        <begin position="236"/>
        <end position="256"/>
    </location>
</feature>
<feature type="transmembrane region" description="Helical" evidence="1">
    <location>
        <begin position="263"/>
        <end position="283"/>
    </location>
</feature>
<feature type="transmembrane region" description="Helical" evidence="1">
    <location>
        <begin position="288"/>
        <end position="308"/>
    </location>
</feature>
<feature type="transmembrane region" description="Helical" evidence="1">
    <location>
        <begin position="338"/>
        <end position="358"/>
    </location>
</feature>
<sequence length="360" mass="39307">MLLLLAEYLQQFHKGFAVFQYLSLRGILGVLTALSLALWLGPWMIRTLQIRQIGQAVRNDGPQSHLSKSGTPTMGGALILSAIAVSTLLWADLSNRYVWVVLIVTLAFGAIGWVDDYRKVIEKNSRGLPSRWKYFWQSVFGLAAAVFLYKTAPTSVETTLILPFIKDVTIPLGVGFVVLTYFVIVGSSNAVNLTDGLDGLAIMPTVMVGGALGIFCYLSGNVKFAEYLLIPYVPGSGELIVFCGALIGAGLGFLWFNTYPAQVFMGDVGALALGAALGTIAVIVRQEIVLFIMGGIFVVETLSVVIQVASFKLTGKRVFRMAPIHHHFELKGWPEPRVIVRFWIITVILVLIGLATLKLR</sequence>
<comment type="function">
    <text evidence="1">Catalyzes the initial step of the lipid cycle reactions in the biosynthesis of the cell wall peptidoglycan: transfers peptidoglycan precursor phospho-MurNAc-pentapeptide from UDP-MurNAc-pentapeptide onto the lipid carrier undecaprenyl phosphate, yielding undecaprenyl-pyrophosphoryl-MurNAc-pentapeptide, known as lipid I.</text>
</comment>
<comment type="catalytic activity">
    <reaction evidence="1">
        <text>UDP-N-acetyl-alpha-D-muramoyl-L-alanyl-gamma-D-glutamyl-meso-2,6-diaminopimeloyl-D-alanyl-D-alanine + di-trans,octa-cis-undecaprenyl phosphate = di-trans,octa-cis-undecaprenyl diphospho-N-acetyl-alpha-D-muramoyl-L-alanyl-D-glutamyl-meso-2,6-diaminopimeloyl-D-alanyl-D-alanine + UMP</text>
        <dbReference type="Rhea" id="RHEA:28386"/>
        <dbReference type="ChEBI" id="CHEBI:57865"/>
        <dbReference type="ChEBI" id="CHEBI:60392"/>
        <dbReference type="ChEBI" id="CHEBI:61386"/>
        <dbReference type="ChEBI" id="CHEBI:61387"/>
        <dbReference type="EC" id="2.7.8.13"/>
    </reaction>
</comment>
<comment type="cofactor">
    <cofactor evidence="1">
        <name>Mg(2+)</name>
        <dbReference type="ChEBI" id="CHEBI:18420"/>
    </cofactor>
</comment>
<comment type="pathway">
    <text evidence="1">Cell wall biogenesis; peptidoglycan biosynthesis.</text>
</comment>
<comment type="subcellular location">
    <subcellularLocation>
        <location evidence="1">Cell inner membrane</location>
        <topology evidence="1">Multi-pass membrane protein</topology>
    </subcellularLocation>
</comment>
<comment type="similarity">
    <text evidence="1">Belongs to the glycosyltransferase 4 family. MraY subfamily.</text>
</comment>
<organism>
    <name type="scientific">Pseudomonas putida (strain ATCC 700007 / DSM 6899 / JCM 31910 / BCRC 17059 / LMG 24140 / F1)</name>
    <dbReference type="NCBI Taxonomy" id="351746"/>
    <lineage>
        <taxon>Bacteria</taxon>
        <taxon>Pseudomonadati</taxon>
        <taxon>Pseudomonadota</taxon>
        <taxon>Gammaproteobacteria</taxon>
        <taxon>Pseudomonadales</taxon>
        <taxon>Pseudomonadaceae</taxon>
        <taxon>Pseudomonas</taxon>
    </lineage>
</organism>
<gene>
    <name evidence="1" type="primary">mraY</name>
    <name type="ordered locus">Pput_4390</name>
</gene>
<proteinExistence type="inferred from homology"/>